<reference key="1">
    <citation type="journal article" date="2001" name="Science">
        <title>Mechanisms of evolution in Rickettsia conorii and R. prowazekii.</title>
        <authorList>
            <person name="Ogata H."/>
            <person name="Audic S."/>
            <person name="Renesto-Audiffren P."/>
            <person name="Fournier P.-E."/>
            <person name="Barbe V."/>
            <person name="Samson D."/>
            <person name="Roux V."/>
            <person name="Cossart P."/>
            <person name="Weissenbach J."/>
            <person name="Claverie J.-M."/>
            <person name="Raoult D."/>
        </authorList>
    </citation>
    <scope>NUCLEOTIDE SEQUENCE [LARGE SCALE GENOMIC DNA]</scope>
    <source>
        <strain>ATCC VR-613 / Malish 7</strain>
    </source>
</reference>
<accession>Q92HP9</accession>
<evidence type="ECO:0000250" key="1"/>
<evidence type="ECO:0000255" key="2"/>
<evidence type="ECO:0000305" key="3"/>
<comment type="function">
    <text evidence="1">Provides the rickettsial cell with host ATP in exchange for rickettsial ADP. This is an obligate exchange system. This energy acquiring activity is an important component of rickettsial parasitism (By similarity).</text>
</comment>
<comment type="subcellular location">
    <subcellularLocation>
        <location>Cell membrane</location>
        <topology>Multi-pass membrane protein</topology>
    </subcellularLocation>
</comment>
<comment type="similarity">
    <text evidence="3">Belongs to the ADP/ATP translocase tlc family.</text>
</comment>
<protein>
    <recommendedName>
        <fullName>ADP,ATP carrier protein 3</fullName>
    </recommendedName>
    <alternativeName>
        <fullName>ADP/ATP translocase 3</fullName>
    </alternativeName>
</protein>
<dbReference type="EMBL" id="AE006914">
    <property type="protein sequence ID" value="AAL03260.1"/>
    <property type="molecule type" value="Genomic_DNA"/>
</dbReference>
<dbReference type="PIR" id="B97790">
    <property type="entry name" value="B97790"/>
</dbReference>
<dbReference type="RefSeq" id="WP_010977341.1">
    <property type="nucleotide sequence ID" value="NC_003103.1"/>
</dbReference>
<dbReference type="GeneID" id="928677"/>
<dbReference type="KEGG" id="rco:RC0722"/>
<dbReference type="PATRIC" id="fig|272944.4.peg.822"/>
<dbReference type="HOGENOM" id="CLU_023964_0_1_5"/>
<dbReference type="Proteomes" id="UP000000816">
    <property type="component" value="Chromosome"/>
</dbReference>
<dbReference type="GO" id="GO:0005886">
    <property type="term" value="C:plasma membrane"/>
    <property type="evidence" value="ECO:0007669"/>
    <property type="project" value="UniProtKB-SubCell"/>
</dbReference>
<dbReference type="GO" id="GO:0005524">
    <property type="term" value="F:ATP binding"/>
    <property type="evidence" value="ECO:0007669"/>
    <property type="project" value="UniProtKB-KW"/>
</dbReference>
<dbReference type="GO" id="GO:0005471">
    <property type="term" value="F:ATP:ADP antiporter activity"/>
    <property type="evidence" value="ECO:0007669"/>
    <property type="project" value="InterPro"/>
</dbReference>
<dbReference type="InterPro" id="IPR004667">
    <property type="entry name" value="ADP_ATP_car_bac_type"/>
</dbReference>
<dbReference type="NCBIfam" id="TIGR00769">
    <property type="entry name" value="AAA"/>
    <property type="match status" value="1"/>
</dbReference>
<dbReference type="PANTHER" id="PTHR31187">
    <property type="match status" value="1"/>
</dbReference>
<dbReference type="PANTHER" id="PTHR31187:SF1">
    <property type="entry name" value="ADP,ATP CARRIER PROTEIN 1"/>
    <property type="match status" value="1"/>
</dbReference>
<dbReference type="Pfam" id="PF03219">
    <property type="entry name" value="TLC"/>
    <property type="match status" value="1"/>
</dbReference>
<sequence length="501" mass="57105">MLPPKIFFEKVKEIMWPIERKELKLFIPMALMMLCILFNFGALRSIKDSLVVPSMGAEIISFLKLWLVLPSCVIFTVLYVKLSNNLNFEYIFYIIVGSFLLFFLLFAYIIYPNQDIYHPNDEMINKLIASYPNFKWFIKIGSQWSYALMYIFAELWSAVVINLMFWQFANHIFDTSKAKRFYPVLGMVGNIGLIIAGSVLVFFSSGQDVIDSELLPDSFNSSAGNAIMLQPIMSIIVTAGIIAMLLFRIINRFILTDSINVLDAKKVTAKMKTKLSVIESIKLVIHSKYIGRIALLIICYGLLINIVEGPWKAKIKELHPNTIDYVNFMGRFNIWMGISCVTFMIIGSNILRRLGWLISALLTPIMLSITGLMFFIFIIFIEEIGECFGDFNLLYAAIIVGAIQNILSKSSKYSLFDSTKEMAYIPLSLELRTKGKAAVEVIGTKFGKSLGAFIQSLIFIIIPTATFDSIIIYLLITFIVMMSLWIWNVIKLNKEYVELCK</sequence>
<name>TLCC_RICCN</name>
<organism>
    <name type="scientific">Rickettsia conorii (strain ATCC VR-613 / Malish 7)</name>
    <dbReference type="NCBI Taxonomy" id="272944"/>
    <lineage>
        <taxon>Bacteria</taxon>
        <taxon>Pseudomonadati</taxon>
        <taxon>Pseudomonadota</taxon>
        <taxon>Alphaproteobacteria</taxon>
        <taxon>Rickettsiales</taxon>
        <taxon>Rickettsiaceae</taxon>
        <taxon>Rickettsieae</taxon>
        <taxon>Rickettsia</taxon>
        <taxon>spotted fever group</taxon>
    </lineage>
</organism>
<keyword id="KW-0067">ATP-binding</keyword>
<keyword id="KW-1003">Cell membrane</keyword>
<keyword id="KW-0472">Membrane</keyword>
<keyword id="KW-0547">Nucleotide-binding</keyword>
<keyword id="KW-0812">Transmembrane</keyword>
<keyword id="KW-1133">Transmembrane helix</keyword>
<keyword id="KW-0813">Transport</keyword>
<feature type="chain" id="PRO_0000286472" description="ADP,ATP carrier protein 3">
    <location>
        <begin position="1"/>
        <end position="501"/>
    </location>
</feature>
<feature type="transmembrane region" description="Helical" evidence="2">
    <location>
        <begin position="23"/>
        <end position="43"/>
    </location>
</feature>
<feature type="transmembrane region" description="Helical" evidence="2">
    <location>
        <begin position="59"/>
        <end position="79"/>
    </location>
</feature>
<feature type="transmembrane region" description="Helical" evidence="2">
    <location>
        <begin position="90"/>
        <end position="110"/>
    </location>
</feature>
<feature type="transmembrane region" description="Helical" evidence="2">
    <location>
        <begin position="146"/>
        <end position="166"/>
    </location>
</feature>
<feature type="transmembrane region" description="Helical" evidence="2">
    <location>
        <begin position="183"/>
        <end position="203"/>
    </location>
</feature>
<feature type="transmembrane region" description="Helical" evidence="2">
    <location>
        <begin position="227"/>
        <end position="247"/>
    </location>
</feature>
<feature type="transmembrane region" description="Helical" evidence="2">
    <location>
        <begin position="293"/>
        <end position="313"/>
    </location>
</feature>
<feature type="transmembrane region" description="Helical" evidence="2">
    <location>
        <begin position="326"/>
        <end position="346"/>
    </location>
</feature>
<feature type="transmembrane region" description="Helical" evidence="2">
    <location>
        <begin position="361"/>
        <end position="381"/>
    </location>
</feature>
<feature type="transmembrane region" description="Helical" evidence="2">
    <location>
        <begin position="387"/>
        <end position="407"/>
    </location>
</feature>
<feature type="transmembrane region" description="Helical" evidence="2">
    <location>
        <begin position="446"/>
        <end position="466"/>
    </location>
</feature>
<feature type="transmembrane region" description="Helical" evidence="2">
    <location>
        <begin position="470"/>
        <end position="490"/>
    </location>
</feature>
<gene>
    <name type="primary">tlcC</name>
    <name type="synonym">tlc3</name>
    <name type="ordered locus">RC0722</name>
</gene>
<proteinExistence type="inferred from homology"/>